<accession>O88384</accession>
<keyword id="KW-0002">3D-structure</keyword>
<keyword id="KW-0007">Acetylation</keyword>
<keyword id="KW-0175">Coiled coil</keyword>
<keyword id="KW-0967">Endosome</keyword>
<keyword id="KW-0458">Lysosome</keyword>
<keyword id="KW-0472">Membrane</keyword>
<keyword id="KW-0488">Methylation</keyword>
<keyword id="KW-0597">Phosphoprotein</keyword>
<keyword id="KW-0653">Protein transport</keyword>
<keyword id="KW-1185">Reference proteome</keyword>
<keyword id="KW-0812">Transmembrane</keyword>
<keyword id="KW-1133">Transmembrane helix</keyword>
<keyword id="KW-0813">Transport</keyword>
<protein>
    <recommendedName>
        <fullName>Vesicle transport through interaction with t-SNAREs homolog 1B</fullName>
    </recommendedName>
    <alternativeName>
        <fullName>Vesicle transport v-SNARE protein Vti1-like 1</fullName>
    </alternativeName>
    <alternativeName>
        <fullName>Vti1-rp1</fullName>
    </alternativeName>
</protein>
<gene>
    <name type="primary">Vti1b</name>
    <name type="synonym">Vti1l1</name>
</gene>
<evidence type="ECO:0000250" key="1">
    <source>
        <dbReference type="UniProtKB" id="Q9UEU0"/>
    </source>
</evidence>
<evidence type="ECO:0000255" key="2"/>
<evidence type="ECO:0000269" key="3">
    <source>
    </source>
</evidence>
<evidence type="ECO:0000269" key="4">
    <source>
    </source>
</evidence>
<evidence type="ECO:0000305" key="5"/>
<evidence type="ECO:0000305" key="6">
    <source>
    </source>
</evidence>
<evidence type="ECO:0007744" key="7">
    <source>
    </source>
</evidence>
<evidence type="ECO:0007829" key="8">
    <source>
        <dbReference type="PDB" id="1GL2"/>
    </source>
</evidence>
<evidence type="ECO:0007829" key="9">
    <source>
        <dbReference type="PDB" id="2QYW"/>
    </source>
</evidence>
<sequence>MAASAASSEHFEKLHEIFRGLLEDLQGVPERLLGTAGTEEKKKLVRDFDENQQEANETLAEMEEELRYAPLTFRNPMMSKLRNYRKDLAKLHREVRSTPLTAAPGGRGDLKYGTYTLENEHLNRLQSQRALLLQGTESLNRATQSIERSHRIATETDQIGTEIIEELGEQRDQLERTKSRLVNTNENLSKSRKILRSMSRKVITNKLLLSVIILLELAILVGLVYYKFFRHH</sequence>
<organism>
    <name type="scientific">Mus musculus</name>
    <name type="common">Mouse</name>
    <dbReference type="NCBI Taxonomy" id="10090"/>
    <lineage>
        <taxon>Eukaryota</taxon>
        <taxon>Metazoa</taxon>
        <taxon>Chordata</taxon>
        <taxon>Craniata</taxon>
        <taxon>Vertebrata</taxon>
        <taxon>Euteleostomi</taxon>
        <taxon>Mammalia</taxon>
        <taxon>Eutheria</taxon>
        <taxon>Euarchontoglires</taxon>
        <taxon>Glires</taxon>
        <taxon>Rodentia</taxon>
        <taxon>Myomorpha</taxon>
        <taxon>Muroidea</taxon>
        <taxon>Muridae</taxon>
        <taxon>Murinae</taxon>
        <taxon>Mus</taxon>
        <taxon>Mus</taxon>
    </lineage>
</organism>
<dbReference type="EMBL" id="AF035208">
    <property type="protein sequence ID" value="AAC23483.1"/>
    <property type="molecule type" value="mRNA"/>
</dbReference>
<dbReference type="CCDS" id="CCDS26008.1"/>
<dbReference type="PDB" id="1GL2">
    <property type="method" value="X-ray"/>
    <property type="resolution" value="1.90 A"/>
    <property type="chains" value="C=140-200"/>
</dbReference>
<dbReference type="PDB" id="2QYW">
    <property type="method" value="X-ray"/>
    <property type="resolution" value="2.00 A"/>
    <property type="chains" value="A=1-96"/>
</dbReference>
<dbReference type="PDBsum" id="1GL2"/>
<dbReference type="PDBsum" id="2QYW"/>
<dbReference type="SMR" id="O88384"/>
<dbReference type="CORUM" id="O88384"/>
<dbReference type="DIP" id="DIP-32212N"/>
<dbReference type="FunCoup" id="O88384">
    <property type="interactions" value="803"/>
</dbReference>
<dbReference type="IntAct" id="O88384">
    <property type="interactions" value="12"/>
</dbReference>
<dbReference type="MINT" id="O88384"/>
<dbReference type="STRING" id="10090.ENSMUSP00000057462"/>
<dbReference type="GlyGen" id="O88384">
    <property type="glycosylation" value="2 sites, 1 N-linked glycan (1 site), 1 O-linked glycan (1 site)"/>
</dbReference>
<dbReference type="iPTMnet" id="O88384"/>
<dbReference type="PhosphoSitePlus" id="O88384"/>
<dbReference type="SwissPalm" id="O88384"/>
<dbReference type="jPOST" id="O88384"/>
<dbReference type="PaxDb" id="10090-ENSMUSP00000057462"/>
<dbReference type="PeptideAtlas" id="O88384"/>
<dbReference type="ProteomicsDB" id="297616"/>
<dbReference type="Pumba" id="O88384"/>
<dbReference type="UCSC" id="uc007nzy.2">
    <property type="organism name" value="mouse"/>
</dbReference>
<dbReference type="AGR" id="MGI:1855688"/>
<dbReference type="MGI" id="MGI:1855688">
    <property type="gene designation" value="Vti1b"/>
</dbReference>
<dbReference type="eggNOG" id="KOG1666">
    <property type="taxonomic scope" value="Eukaryota"/>
</dbReference>
<dbReference type="InParanoid" id="O88384"/>
<dbReference type="OrthoDB" id="430637at2759"/>
<dbReference type="PhylomeDB" id="O88384"/>
<dbReference type="Reactome" id="R-MMU-114608">
    <property type="pathway name" value="Platelet degranulation"/>
</dbReference>
<dbReference type="CD-CODE" id="CE726F99">
    <property type="entry name" value="Postsynaptic density"/>
</dbReference>
<dbReference type="ChiTaRS" id="Vti1b">
    <property type="organism name" value="mouse"/>
</dbReference>
<dbReference type="EvolutionaryTrace" id="O88384"/>
<dbReference type="PRO" id="PR:O88384"/>
<dbReference type="Proteomes" id="UP000000589">
    <property type="component" value="Unplaced"/>
</dbReference>
<dbReference type="RNAct" id="O88384">
    <property type="molecule type" value="protein"/>
</dbReference>
<dbReference type="GO" id="GO:0031901">
    <property type="term" value="C:early endosome membrane"/>
    <property type="evidence" value="ECO:0007669"/>
    <property type="project" value="UniProtKB-SubCell"/>
</dbReference>
<dbReference type="GO" id="GO:0005794">
    <property type="term" value="C:Golgi apparatus"/>
    <property type="evidence" value="ECO:0000314"/>
    <property type="project" value="MGI"/>
</dbReference>
<dbReference type="GO" id="GO:0031902">
    <property type="term" value="C:late endosome membrane"/>
    <property type="evidence" value="ECO:0000250"/>
    <property type="project" value="UniProtKB"/>
</dbReference>
<dbReference type="GO" id="GO:0005765">
    <property type="term" value="C:lysosomal membrane"/>
    <property type="evidence" value="ECO:0000250"/>
    <property type="project" value="UniProtKB"/>
</dbReference>
<dbReference type="GO" id="GO:0016020">
    <property type="term" value="C:membrane"/>
    <property type="evidence" value="ECO:0000314"/>
    <property type="project" value="MGI"/>
</dbReference>
<dbReference type="GO" id="GO:0048471">
    <property type="term" value="C:perinuclear region of cytoplasm"/>
    <property type="evidence" value="ECO:0000314"/>
    <property type="project" value="MGI"/>
</dbReference>
<dbReference type="GO" id="GO:0055038">
    <property type="term" value="C:recycling endosome membrane"/>
    <property type="evidence" value="ECO:0007669"/>
    <property type="project" value="UniProtKB-SubCell"/>
</dbReference>
<dbReference type="GO" id="GO:0000149">
    <property type="term" value="F:SNARE binding"/>
    <property type="evidence" value="ECO:0000266"/>
    <property type="project" value="MGI"/>
</dbReference>
<dbReference type="GO" id="GO:0006886">
    <property type="term" value="P:intracellular protein transport"/>
    <property type="evidence" value="ECO:0007669"/>
    <property type="project" value="InterPro"/>
</dbReference>
<dbReference type="GO" id="GO:0016192">
    <property type="term" value="P:vesicle-mediated transport"/>
    <property type="evidence" value="ECO:0007669"/>
    <property type="project" value="InterPro"/>
</dbReference>
<dbReference type="CDD" id="cd15890">
    <property type="entry name" value="SNARE_Vti1b"/>
    <property type="match status" value="1"/>
</dbReference>
<dbReference type="FunFam" id="1.20.58.400:FF:000003">
    <property type="entry name" value="Vesicle transport through interaction with t-SNAREs homolog 1B"/>
    <property type="match status" value="1"/>
</dbReference>
<dbReference type="FunFam" id="1.20.5.110:FF:000002">
    <property type="entry name" value="Vesicle transport through interaction with t-SNAREsB"/>
    <property type="match status" value="1"/>
</dbReference>
<dbReference type="Gene3D" id="1.20.5.110">
    <property type="match status" value="1"/>
</dbReference>
<dbReference type="Gene3D" id="1.20.58.400">
    <property type="entry name" value="t-snare proteins"/>
    <property type="match status" value="1"/>
</dbReference>
<dbReference type="InterPro" id="IPR010989">
    <property type="entry name" value="SNARE"/>
</dbReference>
<dbReference type="InterPro" id="IPR000727">
    <property type="entry name" value="T_SNARE_dom"/>
</dbReference>
<dbReference type="InterPro" id="IPR038407">
    <property type="entry name" value="v-SNARE_N_sf"/>
</dbReference>
<dbReference type="InterPro" id="IPR007705">
    <property type="entry name" value="Vesicle_trsprt_v-SNARE_N"/>
</dbReference>
<dbReference type="PANTHER" id="PTHR21230:SF89">
    <property type="entry name" value="VESICLE TRANSPORT THROUGH INTERACTION WITH T-SNARES HOMOLOG 1B"/>
    <property type="match status" value="1"/>
</dbReference>
<dbReference type="PANTHER" id="PTHR21230">
    <property type="entry name" value="VESICLE TRANSPORT V-SNARE PROTEIN VTI1-RELATED"/>
    <property type="match status" value="1"/>
</dbReference>
<dbReference type="Pfam" id="PF05008">
    <property type="entry name" value="V-SNARE"/>
    <property type="match status" value="1"/>
</dbReference>
<dbReference type="Pfam" id="PF12352">
    <property type="entry name" value="V-SNARE_C"/>
    <property type="match status" value="1"/>
</dbReference>
<dbReference type="SMART" id="SM00397">
    <property type="entry name" value="t_SNARE"/>
    <property type="match status" value="1"/>
</dbReference>
<dbReference type="SUPFAM" id="SSF58038">
    <property type="entry name" value="SNARE fusion complex"/>
    <property type="match status" value="1"/>
</dbReference>
<dbReference type="SUPFAM" id="SSF47661">
    <property type="entry name" value="t-snare proteins"/>
    <property type="match status" value="1"/>
</dbReference>
<comment type="function">
    <text evidence="6">V-SNARE that mediates vesicle transport pathways through interactions with t-SNAREs on the target membrane. These interactions are proposed to mediate aspects of the specificity of vesicle trafficking and to promote fusion of the lipid bilayers.</text>
</comment>
<comment type="subunit">
    <text evidence="1 3 4">Forms a SNARE complex with STX7, STX8 and VAMP8 which functions in the homotypic fusion of late endosomes. Component of the SNARE complex composed of STX7, STX8, VAMP7 and VIT1B that is required for heterotypic fusion of late endosomes with lysosomes (PubMed:11786915, PubMed:15363411). May interact with STX17. Interacts with CLINT1 (By similarity).</text>
</comment>
<comment type="interaction">
    <interactant intactId="EBI-775853">
        <id>O88384</id>
    </interactant>
    <interactant intactId="EBI-6555653">
        <id>P70280</id>
        <label>Vamp7</label>
    </interactant>
    <organismsDiffer>false</organismsDiffer>
    <experiments>9</experiments>
</comment>
<comment type="interaction">
    <interactant intactId="EBI-775853">
        <id>O88384</id>
    </interactant>
    <interactant intactId="EBI-1171113">
        <id>Q14677</id>
        <label>CLINT1</label>
    </interactant>
    <organismsDiffer>true</organismsDiffer>
    <experiments>6</experiments>
</comment>
<comment type="subcellular location">
    <subcellularLocation>
        <location evidence="1">Early endosome membrane</location>
        <topology evidence="2">Single-pass type IV membrane protein</topology>
    </subcellularLocation>
    <subcellularLocation>
        <location evidence="1">Late endosome membrane</location>
        <topology evidence="1">Single-pass type IV membrane protein</topology>
    </subcellularLocation>
    <subcellularLocation>
        <location evidence="1">Lysosome membrane</location>
    </subcellularLocation>
    <subcellularLocation>
        <location evidence="1">Cytoplasmic granule</location>
    </subcellularLocation>
    <subcellularLocation>
        <location evidence="1">Recycling endosome membrane</location>
        <topology evidence="2">Single-pass type IV membrane protein</topology>
    </subcellularLocation>
</comment>
<comment type="tissue specificity">
    <text>Broadly expressed.</text>
</comment>
<comment type="similarity">
    <text evidence="5">Belongs to the VTI1 family.</text>
</comment>
<reference key="1">
    <citation type="journal article" date="1998" name="J. Biol. Chem.">
        <title>Seven novel mammalian SNARE proteins localize to distinct membrane compartments.</title>
        <authorList>
            <person name="Advani R.J."/>
            <person name="Bae H.-R."/>
            <person name="Bock J.B."/>
            <person name="Chao D.S."/>
            <person name="Doung Y.-C."/>
            <person name="Prekeris R."/>
            <person name="Yoo J.-S."/>
            <person name="Scheller R.H."/>
        </authorList>
    </citation>
    <scope>NUCLEOTIDE SEQUENCE [MRNA]</scope>
</reference>
<reference key="2">
    <citation type="journal article" date="2004" name="Dev. Cell">
        <title>A role of VAMP8/endobrevin in regulated exocytosis of pancreatic acinar cells.</title>
        <authorList>
            <person name="Wang C.-C."/>
            <person name="Ng C.P."/>
            <person name="Lu L."/>
            <person name="Atlashkin V."/>
            <person name="Zhang W."/>
            <person name="Seet L.-F."/>
            <person name="Hong W."/>
        </authorList>
    </citation>
    <scope>IDENTIFICATION IN A COMPLEX WITH VAMP8 AND STX7</scope>
</reference>
<reference key="3">
    <citation type="journal article" date="2009" name="Immunity">
        <title>The phagosomal proteome in interferon-gamma-activated macrophages.</title>
        <authorList>
            <person name="Trost M."/>
            <person name="English L."/>
            <person name="Lemieux S."/>
            <person name="Courcelles M."/>
            <person name="Desjardins M."/>
            <person name="Thibault P."/>
        </authorList>
    </citation>
    <scope>PHOSPHORYLATION [LARGE SCALE ANALYSIS] AT SER-138</scope>
    <scope>IDENTIFICATION BY MASS SPECTROMETRY [LARGE SCALE ANALYSIS]</scope>
</reference>
<reference key="4">
    <citation type="journal article" date="2010" name="Cell">
        <title>A tissue-specific atlas of mouse protein phosphorylation and expression.</title>
        <authorList>
            <person name="Huttlin E.L."/>
            <person name="Jedrychowski M.P."/>
            <person name="Elias J.E."/>
            <person name="Goswami T."/>
            <person name="Rad R."/>
            <person name="Beausoleil S.A."/>
            <person name="Villen J."/>
            <person name="Haas W."/>
            <person name="Sowa M.E."/>
            <person name="Gygi S.P."/>
        </authorList>
    </citation>
    <scope>IDENTIFICATION BY MASS SPECTROMETRY [LARGE SCALE ANALYSIS]</scope>
    <source>
        <tissue>Brain</tissue>
        <tissue>Heart</tissue>
        <tissue>Kidney</tissue>
        <tissue>Liver</tissue>
        <tissue>Lung</tissue>
        <tissue>Spleen</tissue>
        <tissue>Testis</tissue>
    </source>
</reference>
<reference key="5">
    <citation type="journal article" date="2002" name="Nat. Struct. Biol.">
        <title>Crystal structure of the endosomal SNARE complex reveals common structural principles of all SNAREs.</title>
        <authorList>
            <person name="Antonin W."/>
            <person name="Fasshauer D."/>
            <person name="Becker S."/>
            <person name="Jahn R."/>
            <person name="Schneider T.R."/>
        </authorList>
    </citation>
    <scope>X-RAY CRYSTALLOGRAPHY (1.9 ANGSTROMS) OF 140-200 IN COMPLEX WITH STX7; STX8 AND VAMP8</scope>
</reference>
<name>VTI1B_MOUSE</name>
<feature type="initiator methionine" description="Removed" evidence="1">
    <location>
        <position position="1"/>
    </location>
</feature>
<feature type="chain" id="PRO_0000218229" description="Vesicle transport through interaction with t-SNAREs homolog 1B">
    <location>
        <begin position="2"/>
        <end position="232"/>
    </location>
</feature>
<feature type="topological domain" description="Cytoplasmic" evidence="2">
    <location>
        <begin position="2"/>
        <end position="208"/>
    </location>
</feature>
<feature type="transmembrane region" description="Helical; Anchor for type IV membrane protein" evidence="2">
    <location>
        <begin position="209"/>
        <end position="229"/>
    </location>
</feature>
<feature type="topological domain" description="Vesicular" evidence="2">
    <location>
        <begin position="230"/>
        <end position="232"/>
    </location>
</feature>
<feature type="region of interest" description="Interaction with CLINT1" evidence="1">
    <location>
        <begin position="2"/>
        <end position="23"/>
    </location>
</feature>
<feature type="region of interest" description="Interaction with CLINT1" evidence="1">
    <location>
        <begin position="69"/>
        <end position="73"/>
    </location>
</feature>
<feature type="coiled-coil region" evidence="2">
    <location>
        <begin position="36"/>
        <end position="98"/>
    </location>
</feature>
<feature type="coiled-coil region" evidence="2">
    <location>
        <begin position="160"/>
        <end position="201"/>
    </location>
</feature>
<feature type="modified residue" description="N-acetylalanine" evidence="1">
    <location>
        <position position="2"/>
    </location>
</feature>
<feature type="modified residue" description="Omega-N-methylarginine" evidence="1">
    <location>
        <position position="107"/>
    </location>
</feature>
<feature type="modified residue" description="Phosphoserine" evidence="7">
    <location>
        <position position="138"/>
    </location>
</feature>
<feature type="helix" evidence="9">
    <location>
        <begin position="2"/>
        <end position="33"/>
    </location>
</feature>
<feature type="helix" evidence="9">
    <location>
        <begin position="39"/>
        <end position="67"/>
    </location>
</feature>
<feature type="helix" evidence="9">
    <location>
        <begin position="71"/>
        <end position="95"/>
    </location>
</feature>
<feature type="helix" evidence="8">
    <location>
        <begin position="141"/>
        <end position="196"/>
    </location>
</feature>
<proteinExistence type="evidence at protein level"/>